<accession>Q0AB56</accession>
<dbReference type="EMBL" id="CP000453">
    <property type="protein sequence ID" value="ABI55931.1"/>
    <property type="molecule type" value="Genomic_DNA"/>
</dbReference>
<dbReference type="RefSeq" id="WP_011628326.1">
    <property type="nucleotide sequence ID" value="NC_008340.1"/>
</dbReference>
<dbReference type="SMR" id="Q0AB56"/>
<dbReference type="KEGG" id="aeh:Mlg_0577"/>
<dbReference type="eggNOG" id="COG3705">
    <property type="taxonomic scope" value="Bacteria"/>
</dbReference>
<dbReference type="HOGENOM" id="CLU_025113_0_1_6"/>
<dbReference type="OrthoDB" id="9769617at2"/>
<dbReference type="UniPathway" id="UPA00031">
    <property type="reaction ID" value="UER00006"/>
</dbReference>
<dbReference type="Proteomes" id="UP000001962">
    <property type="component" value="Chromosome"/>
</dbReference>
<dbReference type="GO" id="GO:0005737">
    <property type="term" value="C:cytoplasm"/>
    <property type="evidence" value="ECO:0007669"/>
    <property type="project" value="UniProtKB-SubCell"/>
</dbReference>
<dbReference type="GO" id="GO:0004821">
    <property type="term" value="F:histidine-tRNA ligase activity"/>
    <property type="evidence" value="ECO:0007669"/>
    <property type="project" value="TreeGrafter"/>
</dbReference>
<dbReference type="GO" id="GO:0006427">
    <property type="term" value="P:histidyl-tRNA aminoacylation"/>
    <property type="evidence" value="ECO:0007669"/>
    <property type="project" value="TreeGrafter"/>
</dbReference>
<dbReference type="GO" id="GO:0000105">
    <property type="term" value="P:L-histidine biosynthetic process"/>
    <property type="evidence" value="ECO:0007669"/>
    <property type="project" value="UniProtKB-UniRule"/>
</dbReference>
<dbReference type="CDD" id="cd00773">
    <property type="entry name" value="HisRS-like_core"/>
    <property type="match status" value="1"/>
</dbReference>
<dbReference type="Gene3D" id="3.30.930.10">
    <property type="entry name" value="Bira Bifunctional Protein, Domain 2"/>
    <property type="match status" value="1"/>
</dbReference>
<dbReference type="HAMAP" id="MF_00125">
    <property type="entry name" value="HisZ"/>
    <property type="match status" value="1"/>
</dbReference>
<dbReference type="InterPro" id="IPR045864">
    <property type="entry name" value="aa-tRNA-synth_II/BPL/LPL"/>
</dbReference>
<dbReference type="InterPro" id="IPR041715">
    <property type="entry name" value="HisRS-like_core"/>
</dbReference>
<dbReference type="InterPro" id="IPR004516">
    <property type="entry name" value="HisRS/HisZ"/>
</dbReference>
<dbReference type="InterPro" id="IPR004517">
    <property type="entry name" value="HisZ"/>
</dbReference>
<dbReference type="NCBIfam" id="TIGR00443">
    <property type="entry name" value="hisZ_biosyn_reg"/>
    <property type="match status" value="1"/>
</dbReference>
<dbReference type="NCBIfam" id="NF008935">
    <property type="entry name" value="PRK12292.1-1"/>
    <property type="match status" value="1"/>
</dbReference>
<dbReference type="NCBIfam" id="NF009086">
    <property type="entry name" value="PRK12421.1"/>
    <property type="match status" value="1"/>
</dbReference>
<dbReference type="PANTHER" id="PTHR43707:SF1">
    <property type="entry name" value="HISTIDINE--TRNA LIGASE, MITOCHONDRIAL-RELATED"/>
    <property type="match status" value="1"/>
</dbReference>
<dbReference type="PANTHER" id="PTHR43707">
    <property type="entry name" value="HISTIDYL-TRNA SYNTHETASE"/>
    <property type="match status" value="1"/>
</dbReference>
<dbReference type="Pfam" id="PF13393">
    <property type="entry name" value="tRNA-synt_His"/>
    <property type="match status" value="1"/>
</dbReference>
<dbReference type="PIRSF" id="PIRSF001549">
    <property type="entry name" value="His-tRNA_synth"/>
    <property type="match status" value="1"/>
</dbReference>
<dbReference type="SUPFAM" id="SSF55681">
    <property type="entry name" value="Class II aaRS and biotin synthetases"/>
    <property type="match status" value="1"/>
</dbReference>
<gene>
    <name evidence="1" type="primary">hisZ</name>
    <name type="ordered locus">Mlg_0577</name>
</gene>
<proteinExistence type="inferred from homology"/>
<organism>
    <name type="scientific">Alkalilimnicola ehrlichii (strain ATCC BAA-1101 / DSM 17681 / MLHE-1)</name>
    <dbReference type="NCBI Taxonomy" id="187272"/>
    <lineage>
        <taxon>Bacteria</taxon>
        <taxon>Pseudomonadati</taxon>
        <taxon>Pseudomonadota</taxon>
        <taxon>Gammaproteobacteria</taxon>
        <taxon>Chromatiales</taxon>
        <taxon>Ectothiorhodospiraceae</taxon>
        <taxon>Alkalilimnicola</taxon>
    </lineage>
</organism>
<evidence type="ECO:0000255" key="1">
    <source>
        <dbReference type="HAMAP-Rule" id="MF_00125"/>
    </source>
</evidence>
<evidence type="ECO:0000256" key="2">
    <source>
        <dbReference type="SAM" id="MobiDB-lite"/>
    </source>
</evidence>
<keyword id="KW-0028">Amino-acid biosynthesis</keyword>
<keyword id="KW-0963">Cytoplasm</keyword>
<keyword id="KW-0368">Histidine biosynthesis</keyword>
<keyword id="KW-1185">Reference proteome</keyword>
<feature type="chain" id="PRO_1000117669" description="ATP phosphoribosyltransferase regulatory subunit">
    <location>
        <begin position="1"/>
        <end position="401"/>
    </location>
</feature>
<feature type="region of interest" description="Disordered" evidence="2">
    <location>
        <begin position="373"/>
        <end position="401"/>
    </location>
</feature>
<feature type="compositionally biased region" description="Gly residues" evidence="2">
    <location>
        <begin position="392"/>
        <end position="401"/>
    </location>
</feature>
<reference key="1">
    <citation type="submission" date="2006-08" db="EMBL/GenBank/DDBJ databases">
        <title>Complete sequence of Alkalilimnicola ehrilichei MLHE-1.</title>
        <authorList>
            <person name="Copeland A."/>
            <person name="Lucas S."/>
            <person name="Lapidus A."/>
            <person name="Barry K."/>
            <person name="Detter J.C."/>
            <person name="Glavina del Rio T."/>
            <person name="Hammon N."/>
            <person name="Israni S."/>
            <person name="Dalin E."/>
            <person name="Tice H."/>
            <person name="Pitluck S."/>
            <person name="Sims D."/>
            <person name="Brettin T."/>
            <person name="Bruce D."/>
            <person name="Han C."/>
            <person name="Tapia R."/>
            <person name="Gilna P."/>
            <person name="Schmutz J."/>
            <person name="Larimer F."/>
            <person name="Land M."/>
            <person name="Hauser L."/>
            <person name="Kyrpides N."/>
            <person name="Mikhailova N."/>
            <person name="Oremland R.S."/>
            <person name="Hoeft S.E."/>
            <person name="Switzer-Blum J."/>
            <person name="Kulp T."/>
            <person name="King G."/>
            <person name="Tabita R."/>
            <person name="Witte B."/>
            <person name="Santini J.M."/>
            <person name="Basu P."/>
            <person name="Hollibaugh J.T."/>
            <person name="Xie G."/>
            <person name="Stolz J.F."/>
            <person name="Richardson P."/>
        </authorList>
    </citation>
    <scope>NUCLEOTIDE SEQUENCE [LARGE SCALE GENOMIC DNA]</scope>
    <source>
        <strain>ATCC BAA-1101 / DSM 17681 / MLHE-1</strain>
    </source>
</reference>
<sequence length="401" mass="43257">MSDSAFSKDNRWLLPEGVDELLPPRAAQMETLRRQLLDQFGAWGYELVMPPFIEYLDSLLTGTGHDLDVQTFKLTDQLTGRLMGVRADITPQVARIDAHRLRREAPSRLCYIGSVLHARPEGISRSRNPVQVGAELFGHAGVESDIEIISLAVASLRTAGVAQPHLDLGHVGIFRGLARAAGCTPAQEGALLEALQRKAVAEIDELLDEAAIDPHLRRMLRALPQLNGGLEALDHAGEVLAEAPQGVRQALRTLWGVAAGLERRLPDLPLHFDLAELRGYGYHTGIVFAALVPGYGSEVARGGRYDDIGRVFGNPRPATGFSADLRTLVQVADGQPAVPAGKGVLAPWGDEPDLIKVIEALRAEGERVVQELPGQQGGAAAQGCDRRLQQDDGGGWVTRPL</sequence>
<comment type="function">
    <text evidence="1">Required for the first step of histidine biosynthesis. May allow the feedback regulation of ATP phosphoribosyltransferase activity by histidine.</text>
</comment>
<comment type="pathway">
    <text evidence="1">Amino-acid biosynthesis; L-histidine biosynthesis; L-histidine from 5-phospho-alpha-D-ribose 1-diphosphate: step 1/9.</text>
</comment>
<comment type="subunit">
    <text evidence="1">Heteromultimer composed of HisG and HisZ subunits.</text>
</comment>
<comment type="subcellular location">
    <subcellularLocation>
        <location evidence="1">Cytoplasm</location>
    </subcellularLocation>
</comment>
<comment type="miscellaneous">
    <text>This function is generally fulfilled by the C-terminal part of HisG, which is missing in some bacteria such as this one.</text>
</comment>
<comment type="similarity">
    <text evidence="1">Belongs to the class-II aminoacyl-tRNA synthetase family. HisZ subfamily.</text>
</comment>
<name>HISZ_ALKEH</name>
<protein>
    <recommendedName>
        <fullName evidence="1">ATP phosphoribosyltransferase regulatory subunit</fullName>
    </recommendedName>
</protein>